<sequence>MKGGCVSQWKAAAGFLFCVMVFASAERPVFTNHFLVELHKGGEDKARQVAAEHGFGVRKLPFAEGLYHFYHNGLAKAKRRRSLHHKQQLERDPRVKMALQQEGFDRKKRGYRDINEIDINMNDPLFTKQWYLINTGQADGTPGLDLNVAEAWELGYTGKGVTIGIMDDGIDYLHPDLASNYNAEASYDFSSNDPYPYPRYTDDWFNSHGTRCAGEVSAAANNNICGVGVAYNSKVAGIRMLDQPFMTDIIEASSISHMPQLIDIYSASWGPTDNGKTVDGPRELTLQAMADGVNKGRGGKGSIYVWASGDGGSYDDCNCDGYASSMWTISINSAINDGRTALYDESCSSTLASTFSNGRKRNPEAGVATTDLYGNCTLRHSGTSAAAPEAAGVFALALEANLGLTWRDMQHLTVLTSKRNQLHDEVHQWRRNGVGLEFNHLFGYGVLDAGAMVKMAKDWKTVPERFHCVGGSVQDPEKIPSTGKLVLTLTTDACEGKENFVRYLEHVQAVITVNATRRGDLNINMTSPMGTKSILLSRRPRDDDSKVGFDKWPFMTTHTWGEDARGTWTLELGFVGSAPQKGVLKEWTLMLHGTQSAPYIDQVVRDYQSKLAMSKKEELEEELDEAVERSLKSILNKN</sequence>
<gene>
    <name type="primary">PCSK2</name>
    <name type="synonym">NEC2</name>
</gene>
<evidence type="ECO:0000250" key="1">
    <source>
        <dbReference type="UniProtKB" id="P23188"/>
    </source>
</evidence>
<evidence type="ECO:0000255" key="2"/>
<evidence type="ECO:0000255" key="3">
    <source>
        <dbReference type="PROSITE-ProRule" id="PRU01173"/>
    </source>
</evidence>
<evidence type="ECO:0000255" key="4">
    <source>
        <dbReference type="PROSITE-ProRule" id="PRU01240"/>
    </source>
</evidence>
<evidence type="ECO:0000269" key="5">
    <source>
    </source>
</evidence>
<evidence type="ECO:0000269" key="6">
    <source>
    </source>
</evidence>
<evidence type="ECO:0000269" key="7">
    <source>
    </source>
</evidence>
<evidence type="ECO:0000269" key="8">
    <source>
    </source>
</evidence>
<evidence type="ECO:0000303" key="9">
    <source>
    </source>
</evidence>
<evidence type="ECO:0000303" key="10">
    <source>
    </source>
</evidence>
<evidence type="ECO:0000305" key="11"/>
<reference key="1">
    <citation type="journal article" date="1990" name="J. Biol. Chem.">
        <title>Identification of a human insulinoma cDNA encoding a novel mammalian protein structurally related to the yeast dibasic processing protease Kex2.</title>
        <authorList>
            <person name="Smeekens S.P."/>
            <person name="Steiner D.F."/>
        </authorList>
    </citation>
    <scope>NUCLEOTIDE SEQUENCE [MRNA] (ISOFORM 1)</scope>
    <source>
        <tissue>Insulinoma</tissue>
    </source>
</reference>
<reference key="2">
    <citation type="journal article" date="1992" name="Proc. Natl. Acad. Sci. U.S.A.">
        <title>Identification and analysis of the gene encoding human PC2, a prohormone convertase expressed in neuroendocrine tissues.</title>
        <authorList>
            <person name="Ohagi S."/>
            <person name="Lamendola J."/>
            <person name="Lebeau M.M."/>
            <person name="Espinosa R."/>
            <person name="Takeda J."/>
            <person name="Smeekens S.P."/>
            <person name="Chan S.J."/>
            <person name="Steiner D.F."/>
        </authorList>
    </citation>
    <scope>NUCLEOTIDE SEQUENCE [GENOMIC DNA]</scope>
    <source>
        <tissue>Placenta</tissue>
    </source>
</reference>
<reference key="3">
    <citation type="journal article" date="2004" name="Nat. Genet.">
        <title>Complete sequencing and characterization of 21,243 full-length human cDNAs.</title>
        <authorList>
            <person name="Ota T."/>
            <person name="Suzuki Y."/>
            <person name="Nishikawa T."/>
            <person name="Otsuki T."/>
            <person name="Sugiyama T."/>
            <person name="Irie R."/>
            <person name="Wakamatsu A."/>
            <person name="Hayashi K."/>
            <person name="Sato H."/>
            <person name="Nagai K."/>
            <person name="Kimura K."/>
            <person name="Makita H."/>
            <person name="Sekine M."/>
            <person name="Obayashi M."/>
            <person name="Nishi T."/>
            <person name="Shibahara T."/>
            <person name="Tanaka T."/>
            <person name="Ishii S."/>
            <person name="Yamamoto J."/>
            <person name="Saito K."/>
            <person name="Kawai Y."/>
            <person name="Isono Y."/>
            <person name="Nakamura Y."/>
            <person name="Nagahari K."/>
            <person name="Murakami K."/>
            <person name="Yasuda T."/>
            <person name="Iwayanagi T."/>
            <person name="Wagatsuma M."/>
            <person name="Shiratori A."/>
            <person name="Sudo H."/>
            <person name="Hosoiri T."/>
            <person name="Kaku Y."/>
            <person name="Kodaira H."/>
            <person name="Kondo H."/>
            <person name="Sugawara M."/>
            <person name="Takahashi M."/>
            <person name="Kanda K."/>
            <person name="Yokoi T."/>
            <person name="Furuya T."/>
            <person name="Kikkawa E."/>
            <person name="Omura Y."/>
            <person name="Abe K."/>
            <person name="Kamihara K."/>
            <person name="Katsuta N."/>
            <person name="Sato K."/>
            <person name="Tanikawa M."/>
            <person name="Yamazaki M."/>
            <person name="Ninomiya K."/>
            <person name="Ishibashi T."/>
            <person name="Yamashita H."/>
            <person name="Murakawa K."/>
            <person name="Fujimori K."/>
            <person name="Tanai H."/>
            <person name="Kimata M."/>
            <person name="Watanabe M."/>
            <person name="Hiraoka S."/>
            <person name="Chiba Y."/>
            <person name="Ishida S."/>
            <person name="Ono Y."/>
            <person name="Takiguchi S."/>
            <person name="Watanabe S."/>
            <person name="Yosida M."/>
            <person name="Hotuta T."/>
            <person name="Kusano J."/>
            <person name="Kanehori K."/>
            <person name="Takahashi-Fujii A."/>
            <person name="Hara H."/>
            <person name="Tanase T.-O."/>
            <person name="Nomura Y."/>
            <person name="Togiya S."/>
            <person name="Komai F."/>
            <person name="Hara R."/>
            <person name="Takeuchi K."/>
            <person name="Arita M."/>
            <person name="Imose N."/>
            <person name="Musashino K."/>
            <person name="Yuuki H."/>
            <person name="Oshima A."/>
            <person name="Sasaki N."/>
            <person name="Aotsuka S."/>
            <person name="Yoshikawa Y."/>
            <person name="Matsunawa H."/>
            <person name="Ichihara T."/>
            <person name="Shiohata N."/>
            <person name="Sano S."/>
            <person name="Moriya S."/>
            <person name="Momiyama H."/>
            <person name="Satoh N."/>
            <person name="Takami S."/>
            <person name="Terashima Y."/>
            <person name="Suzuki O."/>
            <person name="Nakagawa S."/>
            <person name="Senoh A."/>
            <person name="Mizoguchi H."/>
            <person name="Goto Y."/>
            <person name="Shimizu F."/>
            <person name="Wakebe H."/>
            <person name="Hishigaki H."/>
            <person name="Watanabe T."/>
            <person name="Sugiyama A."/>
            <person name="Takemoto M."/>
            <person name="Kawakami B."/>
            <person name="Yamazaki M."/>
            <person name="Watanabe K."/>
            <person name="Kumagai A."/>
            <person name="Itakura S."/>
            <person name="Fukuzumi Y."/>
            <person name="Fujimori Y."/>
            <person name="Komiyama M."/>
            <person name="Tashiro H."/>
            <person name="Tanigami A."/>
            <person name="Fujiwara T."/>
            <person name="Ono T."/>
            <person name="Yamada K."/>
            <person name="Fujii Y."/>
            <person name="Ozaki K."/>
            <person name="Hirao M."/>
            <person name="Ohmori Y."/>
            <person name="Kawabata A."/>
            <person name="Hikiji T."/>
            <person name="Kobatake N."/>
            <person name="Inagaki H."/>
            <person name="Ikema Y."/>
            <person name="Okamoto S."/>
            <person name="Okitani R."/>
            <person name="Kawakami T."/>
            <person name="Noguchi S."/>
            <person name="Itoh T."/>
            <person name="Shigeta K."/>
            <person name="Senba T."/>
            <person name="Matsumura K."/>
            <person name="Nakajima Y."/>
            <person name="Mizuno T."/>
            <person name="Morinaga M."/>
            <person name="Sasaki M."/>
            <person name="Togashi T."/>
            <person name="Oyama M."/>
            <person name="Hata H."/>
            <person name="Watanabe M."/>
            <person name="Komatsu T."/>
            <person name="Mizushima-Sugano J."/>
            <person name="Satoh T."/>
            <person name="Shirai Y."/>
            <person name="Takahashi Y."/>
            <person name="Nakagawa K."/>
            <person name="Okumura K."/>
            <person name="Nagase T."/>
            <person name="Nomura N."/>
            <person name="Kikuchi H."/>
            <person name="Masuho Y."/>
            <person name="Yamashita R."/>
            <person name="Nakai K."/>
            <person name="Yada T."/>
            <person name="Nakamura Y."/>
            <person name="Ohara O."/>
            <person name="Isogai T."/>
            <person name="Sugano S."/>
        </authorList>
    </citation>
    <scope>NUCLEOTIDE SEQUENCE [LARGE SCALE MRNA] (ISOFORMS 1 AND 2)</scope>
    <source>
        <tissue>Amygdala</tissue>
        <tissue>Brain cortex</tissue>
    </source>
</reference>
<reference key="4">
    <citation type="journal article" date="2001" name="Nature">
        <title>The DNA sequence and comparative analysis of human chromosome 20.</title>
        <authorList>
            <person name="Deloukas P."/>
            <person name="Matthews L.H."/>
            <person name="Ashurst J.L."/>
            <person name="Burton J."/>
            <person name="Gilbert J.G.R."/>
            <person name="Jones M."/>
            <person name="Stavrides G."/>
            <person name="Almeida J.P."/>
            <person name="Babbage A.K."/>
            <person name="Bagguley C.L."/>
            <person name="Bailey J."/>
            <person name="Barlow K.F."/>
            <person name="Bates K.N."/>
            <person name="Beard L.M."/>
            <person name="Beare D.M."/>
            <person name="Beasley O.P."/>
            <person name="Bird C.P."/>
            <person name="Blakey S.E."/>
            <person name="Bridgeman A.M."/>
            <person name="Brown A.J."/>
            <person name="Buck D."/>
            <person name="Burrill W.D."/>
            <person name="Butler A.P."/>
            <person name="Carder C."/>
            <person name="Carter N.P."/>
            <person name="Chapman J.C."/>
            <person name="Clamp M."/>
            <person name="Clark G."/>
            <person name="Clark L.N."/>
            <person name="Clark S.Y."/>
            <person name="Clee C.M."/>
            <person name="Clegg S."/>
            <person name="Cobley V.E."/>
            <person name="Collier R.E."/>
            <person name="Connor R.E."/>
            <person name="Corby N.R."/>
            <person name="Coulson A."/>
            <person name="Coville G.J."/>
            <person name="Deadman R."/>
            <person name="Dhami P.D."/>
            <person name="Dunn M."/>
            <person name="Ellington A.G."/>
            <person name="Frankland J.A."/>
            <person name="Fraser A."/>
            <person name="French L."/>
            <person name="Garner P."/>
            <person name="Grafham D.V."/>
            <person name="Griffiths C."/>
            <person name="Griffiths M.N.D."/>
            <person name="Gwilliam R."/>
            <person name="Hall R.E."/>
            <person name="Hammond S."/>
            <person name="Harley J.L."/>
            <person name="Heath P.D."/>
            <person name="Ho S."/>
            <person name="Holden J.L."/>
            <person name="Howden P.J."/>
            <person name="Huckle E."/>
            <person name="Hunt A.R."/>
            <person name="Hunt S.E."/>
            <person name="Jekosch K."/>
            <person name="Johnson C.M."/>
            <person name="Johnson D."/>
            <person name="Kay M.P."/>
            <person name="Kimberley A.M."/>
            <person name="King A."/>
            <person name="Knights A."/>
            <person name="Laird G.K."/>
            <person name="Lawlor S."/>
            <person name="Lehvaeslaiho M.H."/>
            <person name="Leversha M.A."/>
            <person name="Lloyd C."/>
            <person name="Lloyd D.M."/>
            <person name="Lovell J.D."/>
            <person name="Marsh V.L."/>
            <person name="Martin S.L."/>
            <person name="McConnachie L.J."/>
            <person name="McLay K."/>
            <person name="McMurray A.A."/>
            <person name="Milne S.A."/>
            <person name="Mistry D."/>
            <person name="Moore M.J.F."/>
            <person name="Mullikin J.C."/>
            <person name="Nickerson T."/>
            <person name="Oliver K."/>
            <person name="Parker A."/>
            <person name="Patel R."/>
            <person name="Pearce T.A.V."/>
            <person name="Peck A.I."/>
            <person name="Phillimore B.J.C.T."/>
            <person name="Prathalingam S.R."/>
            <person name="Plumb R.W."/>
            <person name="Ramsay H."/>
            <person name="Rice C.M."/>
            <person name="Ross M.T."/>
            <person name="Scott C.E."/>
            <person name="Sehra H.K."/>
            <person name="Shownkeen R."/>
            <person name="Sims S."/>
            <person name="Skuce C.D."/>
            <person name="Smith M.L."/>
            <person name="Soderlund C."/>
            <person name="Steward C.A."/>
            <person name="Sulston J.E."/>
            <person name="Swann R.M."/>
            <person name="Sycamore N."/>
            <person name="Taylor R."/>
            <person name="Tee L."/>
            <person name="Thomas D.W."/>
            <person name="Thorpe A."/>
            <person name="Tracey A."/>
            <person name="Tromans A.C."/>
            <person name="Vaudin M."/>
            <person name="Wall M."/>
            <person name="Wallis J.M."/>
            <person name="Whitehead S.L."/>
            <person name="Whittaker P."/>
            <person name="Willey D.L."/>
            <person name="Williams L."/>
            <person name="Williams S.A."/>
            <person name="Wilming L."/>
            <person name="Wray P.W."/>
            <person name="Hubbard T."/>
            <person name="Durbin R.M."/>
            <person name="Bentley D.R."/>
            <person name="Beck S."/>
            <person name="Rogers J."/>
        </authorList>
    </citation>
    <scope>NUCLEOTIDE SEQUENCE [LARGE SCALE GENOMIC DNA]</scope>
</reference>
<reference key="5">
    <citation type="submission" date="2005-09" db="EMBL/GenBank/DDBJ databases">
        <authorList>
            <person name="Mural R.J."/>
            <person name="Istrail S."/>
            <person name="Sutton G."/>
            <person name="Florea L."/>
            <person name="Halpern A.L."/>
            <person name="Mobarry C.M."/>
            <person name="Lippert R."/>
            <person name="Walenz B."/>
            <person name="Shatkay H."/>
            <person name="Dew I."/>
            <person name="Miller J.R."/>
            <person name="Flanigan M.J."/>
            <person name="Edwards N.J."/>
            <person name="Bolanos R."/>
            <person name="Fasulo D."/>
            <person name="Halldorsson B.V."/>
            <person name="Hannenhalli S."/>
            <person name="Turner R."/>
            <person name="Yooseph S."/>
            <person name="Lu F."/>
            <person name="Nusskern D.R."/>
            <person name="Shue B.C."/>
            <person name="Zheng X.H."/>
            <person name="Zhong F."/>
            <person name="Delcher A.L."/>
            <person name="Huson D.H."/>
            <person name="Kravitz S.A."/>
            <person name="Mouchard L."/>
            <person name="Reinert K."/>
            <person name="Remington K.A."/>
            <person name="Clark A.G."/>
            <person name="Waterman M.S."/>
            <person name="Eichler E.E."/>
            <person name="Adams M.D."/>
            <person name="Hunkapiller M.W."/>
            <person name="Myers E.W."/>
            <person name="Venter J.C."/>
        </authorList>
    </citation>
    <scope>NUCLEOTIDE SEQUENCE [LARGE SCALE GENOMIC DNA]</scope>
</reference>
<reference key="6">
    <citation type="journal article" date="2004" name="Genome Res.">
        <title>The status, quality, and expansion of the NIH full-length cDNA project: the Mammalian Gene Collection (MGC).</title>
        <authorList>
            <consortium name="The MGC Project Team"/>
        </authorList>
    </citation>
    <scope>NUCLEOTIDE SEQUENCE [LARGE SCALE MRNA] (ISOFORMS 1 AND 3)</scope>
    <scope>VARIANTS GLN-244 AND GLU-484</scope>
    <source>
        <tissue>Brain</tissue>
        <tissue>Lung</tissue>
    </source>
</reference>
<reference key="7">
    <citation type="journal article" date="1994" name="Nippon Rinsho">
        <title>Analysis of the gene encoding human PC2, a prohormone processing enzyme.</title>
        <authorList>
            <person name="Ohagi S."/>
            <person name="Yoshida H."/>
            <person name="Nanjo K."/>
        </authorList>
    </citation>
    <scope>NUCLEOTIDE SEQUENCE [GENOMIC DNA] OF 1-8</scope>
</reference>
<reference key="8">
    <citation type="journal article" date="1997" name="FEBS Lett.">
        <title>Role of the prohormone convertase PC2 in the processing of proglucagon to glucagon.</title>
        <authorList>
            <person name="Rouille Y."/>
            <person name="Bianchi M."/>
            <person name="Irminger J.C."/>
            <person name="Halban P.A."/>
        </authorList>
    </citation>
    <scope>FUNCTION</scope>
</reference>
<reference key="9">
    <citation type="journal article" date="2017" name="Diabetes Res. Clin. Pract.">
        <title>Functional analysis of PCSK2 coding variants: A founder effect in the Old Order Amish population.</title>
        <authorList>
            <person name="Winters A."/>
            <person name="Ramos-Molina B."/>
            <person name="Jarvela T.S."/>
            <person name="Yerges-Armstrong L."/>
            <person name="Pollin T.I."/>
            <person name="Lindberg I."/>
        </authorList>
    </citation>
    <scope>FUNCTION</scope>
    <scope>SUBCELLULAR LOCATION</scope>
    <scope>VARIANT TRP-430</scope>
    <scope>CHARACTERIZATION OF VARIANTS ASP-77; THR-267; TRP-430 AND VAL-525</scope>
</reference>
<reference key="10">
    <citation type="journal article" date="2006" name="Science">
        <title>The consensus coding sequences of human breast and colorectal cancers.</title>
        <authorList>
            <person name="Sjoeblom T."/>
            <person name="Jones S."/>
            <person name="Wood L.D."/>
            <person name="Parsons D.W."/>
            <person name="Lin J."/>
            <person name="Barber T.D."/>
            <person name="Mandelker D."/>
            <person name="Leary R.J."/>
            <person name="Ptak J."/>
            <person name="Silliman N."/>
            <person name="Szabo S."/>
            <person name="Buckhaults P."/>
            <person name="Farrell C."/>
            <person name="Meeh P."/>
            <person name="Markowitz S.D."/>
            <person name="Willis J."/>
            <person name="Dawson D."/>
            <person name="Willson J.K.V."/>
            <person name="Gazdar A.F."/>
            <person name="Hartigan J."/>
            <person name="Wu L."/>
            <person name="Liu C."/>
            <person name="Parmigiani G."/>
            <person name="Park B.H."/>
            <person name="Bachman K.E."/>
            <person name="Papadopoulos N."/>
            <person name="Vogelstein B."/>
            <person name="Kinzler K.W."/>
            <person name="Velculescu V.E."/>
        </authorList>
    </citation>
    <scope>VARIANT [LARGE SCALE ANALYSIS] ASN-424</scope>
</reference>
<accession>P16519</accession>
<accession>B1ANH9</accession>
<accession>B4DFQ3</accession>
<accession>Q14927</accession>
<accession>Q5JYQ1</accession>
<accession>Q8IWA8</accession>
<accession>Q9NQG3</accession>
<accession>Q9NUG1</accession>
<accession>Q9UJC6</accession>
<dbReference type="EC" id="3.4.21.94"/>
<dbReference type="EMBL" id="J05252">
    <property type="protein sequence ID" value="AAA60032.1"/>
    <property type="molecule type" value="mRNA"/>
</dbReference>
<dbReference type="EMBL" id="M95971">
    <property type="protein sequence ID" value="AAA59919.1"/>
    <property type="molecule type" value="Genomic_DNA"/>
</dbReference>
<dbReference type="EMBL" id="M95960">
    <property type="protein sequence ID" value="AAA59919.1"/>
    <property type="status" value="JOINED"/>
    <property type="molecule type" value="Genomic_DNA"/>
</dbReference>
<dbReference type="EMBL" id="M95961">
    <property type="protein sequence ID" value="AAA59919.1"/>
    <property type="status" value="JOINED"/>
    <property type="molecule type" value="Genomic_DNA"/>
</dbReference>
<dbReference type="EMBL" id="M95962">
    <property type="protein sequence ID" value="AAA59919.1"/>
    <property type="status" value="JOINED"/>
    <property type="molecule type" value="Genomic_DNA"/>
</dbReference>
<dbReference type="EMBL" id="M95963">
    <property type="protein sequence ID" value="AAA59919.1"/>
    <property type="status" value="JOINED"/>
    <property type="molecule type" value="Genomic_DNA"/>
</dbReference>
<dbReference type="EMBL" id="M95964">
    <property type="protein sequence ID" value="AAA59919.1"/>
    <property type="status" value="JOINED"/>
    <property type="molecule type" value="Genomic_DNA"/>
</dbReference>
<dbReference type="EMBL" id="M95965">
    <property type="protein sequence ID" value="AAA59919.1"/>
    <property type="status" value="JOINED"/>
    <property type="molecule type" value="Genomic_DNA"/>
</dbReference>
<dbReference type="EMBL" id="M95966">
    <property type="protein sequence ID" value="AAA59919.1"/>
    <property type="status" value="JOINED"/>
    <property type="molecule type" value="Genomic_DNA"/>
</dbReference>
<dbReference type="EMBL" id="M95967">
    <property type="protein sequence ID" value="AAA59919.1"/>
    <property type="status" value="JOINED"/>
    <property type="molecule type" value="Genomic_DNA"/>
</dbReference>
<dbReference type="EMBL" id="M95968">
    <property type="protein sequence ID" value="AAA59919.1"/>
    <property type="status" value="JOINED"/>
    <property type="molecule type" value="Genomic_DNA"/>
</dbReference>
<dbReference type="EMBL" id="M95969">
    <property type="protein sequence ID" value="AAA59919.1"/>
    <property type="status" value="JOINED"/>
    <property type="molecule type" value="Genomic_DNA"/>
</dbReference>
<dbReference type="EMBL" id="M95970">
    <property type="protein sequence ID" value="AAA59919.1"/>
    <property type="status" value="JOINED"/>
    <property type="molecule type" value="Genomic_DNA"/>
</dbReference>
<dbReference type="EMBL" id="AK294200">
    <property type="protein sequence ID" value="BAG57514.1"/>
    <property type="molecule type" value="mRNA"/>
</dbReference>
<dbReference type="EMBL" id="AK312341">
    <property type="protein sequence ID" value="BAG35262.1"/>
    <property type="molecule type" value="mRNA"/>
</dbReference>
<dbReference type="EMBL" id="AL031664">
    <property type="status" value="NOT_ANNOTATED_CDS"/>
    <property type="molecule type" value="Genomic_DNA"/>
</dbReference>
<dbReference type="EMBL" id="AL031675">
    <property type="status" value="NOT_ANNOTATED_CDS"/>
    <property type="molecule type" value="Genomic_DNA"/>
</dbReference>
<dbReference type="EMBL" id="AL121779">
    <property type="status" value="NOT_ANNOTATED_CDS"/>
    <property type="molecule type" value="Genomic_DNA"/>
</dbReference>
<dbReference type="EMBL" id="AL359511">
    <property type="status" value="NOT_ANNOTATED_CDS"/>
    <property type="molecule type" value="Genomic_DNA"/>
</dbReference>
<dbReference type="EMBL" id="CH471133">
    <property type="protein sequence ID" value="EAX10279.1"/>
    <property type="molecule type" value="Genomic_DNA"/>
</dbReference>
<dbReference type="EMBL" id="CH471133">
    <property type="protein sequence ID" value="EAX10280.1"/>
    <property type="molecule type" value="Genomic_DNA"/>
</dbReference>
<dbReference type="EMBL" id="CH471133">
    <property type="protein sequence ID" value="EAX10281.1"/>
    <property type="molecule type" value="Genomic_DNA"/>
</dbReference>
<dbReference type="EMBL" id="BC005815">
    <property type="protein sequence ID" value="AAH05815.1"/>
    <property type="molecule type" value="mRNA"/>
</dbReference>
<dbReference type="EMBL" id="BC040546">
    <property type="protein sequence ID" value="AAH40546.1"/>
    <property type="molecule type" value="mRNA"/>
</dbReference>
<dbReference type="EMBL" id="S75955">
    <property type="protein sequence ID" value="AAD14202.1"/>
    <property type="molecule type" value="Genomic_DNA"/>
</dbReference>
<dbReference type="CCDS" id="CCDS13125.1">
    <molecule id="P16519-1"/>
</dbReference>
<dbReference type="CCDS" id="CCDS56179.1">
    <molecule id="P16519-2"/>
</dbReference>
<dbReference type="CCDS" id="CCDS56180.1">
    <molecule id="P16519-3"/>
</dbReference>
<dbReference type="PIR" id="A45382">
    <property type="entry name" value="KXHUC2"/>
</dbReference>
<dbReference type="RefSeq" id="NP_001188457.1">
    <molecule id="P16519-3"/>
    <property type="nucleotide sequence ID" value="NM_001201528.2"/>
</dbReference>
<dbReference type="RefSeq" id="NP_001188458.1">
    <molecule id="P16519-2"/>
    <property type="nucleotide sequence ID" value="NM_001201529.3"/>
</dbReference>
<dbReference type="RefSeq" id="NP_002585.2">
    <molecule id="P16519-1"/>
    <property type="nucleotide sequence ID" value="NM_002594.4"/>
</dbReference>
<dbReference type="SMR" id="P16519"/>
<dbReference type="FunCoup" id="P16519">
    <property type="interactions" value="469"/>
</dbReference>
<dbReference type="IntAct" id="P16519">
    <property type="interactions" value="4"/>
</dbReference>
<dbReference type="MINT" id="P16519"/>
<dbReference type="STRING" id="9606.ENSP00000262545"/>
<dbReference type="BindingDB" id="P16519"/>
<dbReference type="ChEMBL" id="CHEMBL2433"/>
<dbReference type="DrugBank" id="DB00030">
    <property type="generic name" value="Insulin human"/>
</dbReference>
<dbReference type="GuidetoPHARMACOLOGY" id="2383"/>
<dbReference type="MEROPS" id="S08.073"/>
<dbReference type="GlyConnect" id="1551">
    <property type="glycosylation" value="3 N-Linked glycans (1 site)"/>
</dbReference>
<dbReference type="GlyCosmos" id="P16519">
    <property type="glycosylation" value="3 sites, 3 glycans"/>
</dbReference>
<dbReference type="GlyGen" id="P16519">
    <property type="glycosylation" value="3 sites, 3 N-linked glycans (1 site)"/>
</dbReference>
<dbReference type="iPTMnet" id="P16519"/>
<dbReference type="PhosphoSitePlus" id="P16519"/>
<dbReference type="BioMuta" id="PCSK2"/>
<dbReference type="DMDM" id="13124785"/>
<dbReference type="MassIVE" id="P16519"/>
<dbReference type="PaxDb" id="9606-ENSP00000262545"/>
<dbReference type="PeptideAtlas" id="P16519"/>
<dbReference type="ProteomicsDB" id="3261"/>
<dbReference type="ProteomicsDB" id="53377">
    <molecule id="P16519-1"/>
</dbReference>
<dbReference type="ProteomicsDB" id="53378">
    <molecule id="P16519-2"/>
</dbReference>
<dbReference type="Antibodypedia" id="9205">
    <property type="antibodies" value="209 antibodies from 32 providers"/>
</dbReference>
<dbReference type="DNASU" id="5126"/>
<dbReference type="Ensembl" id="ENST00000262545.7">
    <molecule id="P16519-1"/>
    <property type="protein sequence ID" value="ENSP00000262545.2"/>
    <property type="gene ID" value="ENSG00000125851.10"/>
</dbReference>
<dbReference type="Ensembl" id="ENST00000377899.5">
    <molecule id="P16519-3"/>
    <property type="protein sequence ID" value="ENSP00000367131.1"/>
    <property type="gene ID" value="ENSG00000125851.10"/>
</dbReference>
<dbReference type="Ensembl" id="ENST00000536609.1">
    <molecule id="P16519-2"/>
    <property type="protein sequence ID" value="ENSP00000437458.1"/>
    <property type="gene ID" value="ENSG00000125851.10"/>
</dbReference>
<dbReference type="GeneID" id="5126"/>
<dbReference type="KEGG" id="hsa:5126"/>
<dbReference type="MANE-Select" id="ENST00000262545.7">
    <property type="protein sequence ID" value="ENSP00000262545.2"/>
    <property type="RefSeq nucleotide sequence ID" value="NM_002594.5"/>
    <property type="RefSeq protein sequence ID" value="NP_002585.2"/>
</dbReference>
<dbReference type="UCSC" id="uc002wpl.4">
    <molecule id="P16519-1"/>
    <property type="organism name" value="human"/>
</dbReference>
<dbReference type="AGR" id="HGNC:8744"/>
<dbReference type="CTD" id="5126"/>
<dbReference type="DisGeNET" id="5126"/>
<dbReference type="GeneCards" id="PCSK2"/>
<dbReference type="HGNC" id="HGNC:8744">
    <property type="gene designation" value="PCSK2"/>
</dbReference>
<dbReference type="HPA" id="ENSG00000125851">
    <property type="expression patterns" value="Tissue enhanced (adrenal gland, retina, thyroid gland)"/>
</dbReference>
<dbReference type="MIM" id="162151">
    <property type="type" value="gene"/>
</dbReference>
<dbReference type="neXtProt" id="NX_P16519"/>
<dbReference type="OpenTargets" id="ENSG00000125851"/>
<dbReference type="PharmGKB" id="PA33091"/>
<dbReference type="VEuPathDB" id="HostDB:ENSG00000125851"/>
<dbReference type="eggNOG" id="KOG3526">
    <property type="taxonomic scope" value="Eukaryota"/>
</dbReference>
<dbReference type="GeneTree" id="ENSGT00940000156965"/>
<dbReference type="HOGENOM" id="CLU_002976_4_4_1"/>
<dbReference type="InParanoid" id="P16519"/>
<dbReference type="OMA" id="LAKQWHS"/>
<dbReference type="OrthoDB" id="300641at2759"/>
<dbReference type="PAN-GO" id="P16519">
    <property type="GO annotations" value="5 GO annotations based on evolutionary models"/>
</dbReference>
<dbReference type="PhylomeDB" id="P16519"/>
<dbReference type="TreeFam" id="TF314277"/>
<dbReference type="PathwayCommons" id="P16519"/>
<dbReference type="Reactome" id="R-HSA-264876">
    <property type="pathway name" value="Insulin processing"/>
</dbReference>
<dbReference type="SignaLink" id="P16519"/>
<dbReference type="SIGNOR" id="P16519"/>
<dbReference type="BioGRID-ORCS" id="5126">
    <property type="hits" value="10 hits in 1154 CRISPR screens"/>
</dbReference>
<dbReference type="ChiTaRS" id="PCSK2">
    <property type="organism name" value="human"/>
</dbReference>
<dbReference type="GeneWiki" id="Proprotein_convertase_2"/>
<dbReference type="GenomeRNAi" id="5126"/>
<dbReference type="Pharos" id="P16519">
    <property type="development level" value="Tchem"/>
</dbReference>
<dbReference type="PRO" id="PR:P16519"/>
<dbReference type="Proteomes" id="UP000005640">
    <property type="component" value="Chromosome 20"/>
</dbReference>
<dbReference type="RNAct" id="P16519">
    <property type="molecule type" value="protein"/>
</dbReference>
<dbReference type="Bgee" id="ENSG00000125851">
    <property type="expression patterns" value="Expressed in islet of Langerhans and 151 other cell types or tissues"/>
</dbReference>
<dbReference type="GO" id="GO:0005615">
    <property type="term" value="C:extracellular space"/>
    <property type="evidence" value="ECO:0000314"/>
    <property type="project" value="UniProtKB"/>
</dbReference>
<dbReference type="GO" id="GO:0043231">
    <property type="term" value="C:intracellular membrane-bounded organelle"/>
    <property type="evidence" value="ECO:0000314"/>
    <property type="project" value="HPA"/>
</dbReference>
<dbReference type="GO" id="GO:0016020">
    <property type="term" value="C:membrane"/>
    <property type="evidence" value="ECO:0000314"/>
    <property type="project" value="BHF-UCL"/>
</dbReference>
<dbReference type="GO" id="GO:0043005">
    <property type="term" value="C:neuron projection"/>
    <property type="evidence" value="ECO:0000318"/>
    <property type="project" value="GO_Central"/>
</dbReference>
<dbReference type="GO" id="GO:0005654">
    <property type="term" value="C:nucleoplasm"/>
    <property type="evidence" value="ECO:0000314"/>
    <property type="project" value="HPA"/>
</dbReference>
<dbReference type="GO" id="GO:0030141">
    <property type="term" value="C:secretory granule"/>
    <property type="evidence" value="ECO:0007669"/>
    <property type="project" value="Ensembl"/>
</dbReference>
<dbReference type="GO" id="GO:0030133">
    <property type="term" value="C:transport vesicle"/>
    <property type="evidence" value="ECO:0007669"/>
    <property type="project" value="UniProtKB-SubCell"/>
</dbReference>
<dbReference type="GO" id="GO:0004252">
    <property type="term" value="F:serine-type endopeptidase activity"/>
    <property type="evidence" value="ECO:0000314"/>
    <property type="project" value="BHF-UCL"/>
</dbReference>
<dbReference type="GO" id="GO:0034230">
    <property type="term" value="P:enkephalin processing"/>
    <property type="evidence" value="ECO:0000250"/>
    <property type="project" value="BHF-UCL"/>
</dbReference>
<dbReference type="GO" id="GO:0030070">
    <property type="term" value="P:insulin processing"/>
    <property type="evidence" value="ECO:0000314"/>
    <property type="project" value="BHF-UCL"/>
</dbReference>
<dbReference type="GO" id="GO:0034231">
    <property type="term" value="P:islet amyloid polypeptide processing"/>
    <property type="evidence" value="ECO:0000250"/>
    <property type="project" value="BHF-UCL"/>
</dbReference>
<dbReference type="GO" id="GO:0007399">
    <property type="term" value="P:nervous system development"/>
    <property type="evidence" value="ECO:0007669"/>
    <property type="project" value="Ensembl"/>
</dbReference>
<dbReference type="GO" id="GO:0016486">
    <property type="term" value="P:peptide hormone processing"/>
    <property type="evidence" value="ECO:0000314"/>
    <property type="project" value="UniProtKB"/>
</dbReference>
<dbReference type="GO" id="GO:0016540">
    <property type="term" value="P:protein autoprocessing"/>
    <property type="evidence" value="ECO:0007669"/>
    <property type="project" value="Ensembl"/>
</dbReference>
<dbReference type="GO" id="GO:0006508">
    <property type="term" value="P:proteolysis"/>
    <property type="evidence" value="ECO:0000314"/>
    <property type="project" value="BHF-UCL"/>
</dbReference>
<dbReference type="CDD" id="cd04059">
    <property type="entry name" value="Peptidases_S8_Protein_convertases_Kexins_Furin-like"/>
    <property type="match status" value="1"/>
</dbReference>
<dbReference type="FunFam" id="2.60.120.260:FF:000020">
    <property type="entry name" value="neuroendocrine convertase 2"/>
    <property type="match status" value="1"/>
</dbReference>
<dbReference type="FunFam" id="3.30.70.850:FF:000003">
    <property type="entry name" value="neuroendocrine convertase 2 isoform X1"/>
    <property type="match status" value="1"/>
</dbReference>
<dbReference type="FunFam" id="3.40.50.200:FF:000004">
    <property type="entry name" value="Proprotein convertase type 2"/>
    <property type="match status" value="1"/>
</dbReference>
<dbReference type="Gene3D" id="2.60.120.260">
    <property type="entry name" value="Galactose-binding domain-like"/>
    <property type="match status" value="1"/>
</dbReference>
<dbReference type="Gene3D" id="3.30.70.850">
    <property type="entry name" value="Peptidase S8, pro-domain"/>
    <property type="match status" value="1"/>
</dbReference>
<dbReference type="Gene3D" id="3.40.50.200">
    <property type="entry name" value="Peptidase S8/S53 domain"/>
    <property type="match status" value="1"/>
</dbReference>
<dbReference type="InterPro" id="IPR008979">
    <property type="entry name" value="Galactose-bd-like_sf"/>
</dbReference>
<dbReference type="InterPro" id="IPR034182">
    <property type="entry name" value="Kexin/furin"/>
</dbReference>
<dbReference type="InterPro" id="IPR002884">
    <property type="entry name" value="P_dom"/>
</dbReference>
<dbReference type="InterPro" id="IPR000209">
    <property type="entry name" value="Peptidase_S8/S53_dom"/>
</dbReference>
<dbReference type="InterPro" id="IPR036852">
    <property type="entry name" value="Peptidase_S8/S53_dom_sf"/>
</dbReference>
<dbReference type="InterPro" id="IPR023827">
    <property type="entry name" value="Peptidase_S8_Asp-AS"/>
</dbReference>
<dbReference type="InterPro" id="IPR022398">
    <property type="entry name" value="Peptidase_S8_His-AS"/>
</dbReference>
<dbReference type="InterPro" id="IPR023828">
    <property type="entry name" value="Peptidase_S8_Ser-AS"/>
</dbReference>
<dbReference type="InterPro" id="IPR015500">
    <property type="entry name" value="Peptidase_S8_subtilisin-rel"/>
</dbReference>
<dbReference type="InterPro" id="IPR032815">
    <property type="entry name" value="S8_pro-domain"/>
</dbReference>
<dbReference type="InterPro" id="IPR038466">
    <property type="entry name" value="S8_pro-domain_sf"/>
</dbReference>
<dbReference type="PANTHER" id="PTHR42884:SF13">
    <property type="entry name" value="NEUROENDOCRINE CONVERTASE 2"/>
    <property type="match status" value="1"/>
</dbReference>
<dbReference type="PANTHER" id="PTHR42884">
    <property type="entry name" value="PROPROTEIN CONVERTASE SUBTILISIN/KEXIN-RELATED"/>
    <property type="match status" value="1"/>
</dbReference>
<dbReference type="Pfam" id="PF01483">
    <property type="entry name" value="P_proprotein"/>
    <property type="match status" value="1"/>
</dbReference>
<dbReference type="Pfam" id="PF00082">
    <property type="entry name" value="Peptidase_S8"/>
    <property type="match status" value="1"/>
</dbReference>
<dbReference type="Pfam" id="PF16470">
    <property type="entry name" value="S8_pro-domain"/>
    <property type="match status" value="1"/>
</dbReference>
<dbReference type="PRINTS" id="PR00723">
    <property type="entry name" value="SUBTILISIN"/>
</dbReference>
<dbReference type="SUPFAM" id="SSF49785">
    <property type="entry name" value="Galactose-binding domain-like"/>
    <property type="match status" value="1"/>
</dbReference>
<dbReference type="SUPFAM" id="SSF54897">
    <property type="entry name" value="Protease propeptides/inhibitors"/>
    <property type="match status" value="1"/>
</dbReference>
<dbReference type="SUPFAM" id="SSF52743">
    <property type="entry name" value="Subtilisin-like"/>
    <property type="match status" value="1"/>
</dbReference>
<dbReference type="PROSITE" id="PS51829">
    <property type="entry name" value="P_HOMO_B"/>
    <property type="match status" value="1"/>
</dbReference>
<dbReference type="PROSITE" id="PS51892">
    <property type="entry name" value="SUBTILASE"/>
    <property type="match status" value="1"/>
</dbReference>
<dbReference type="PROSITE" id="PS00136">
    <property type="entry name" value="SUBTILASE_ASP"/>
    <property type="match status" value="1"/>
</dbReference>
<dbReference type="PROSITE" id="PS00137">
    <property type="entry name" value="SUBTILASE_HIS"/>
    <property type="match status" value="1"/>
</dbReference>
<dbReference type="PROSITE" id="PS00138">
    <property type="entry name" value="SUBTILASE_SER"/>
    <property type="match status" value="1"/>
</dbReference>
<name>NEC2_HUMAN</name>
<keyword id="KW-0025">Alternative splicing</keyword>
<keyword id="KW-0165">Cleavage on pair of basic residues</keyword>
<keyword id="KW-0968">Cytoplasmic vesicle</keyword>
<keyword id="KW-1015">Disulfide bond</keyword>
<keyword id="KW-0325">Glycoprotein</keyword>
<keyword id="KW-0378">Hydrolase</keyword>
<keyword id="KW-0645">Protease</keyword>
<keyword id="KW-1267">Proteomics identification</keyword>
<keyword id="KW-1185">Reference proteome</keyword>
<keyword id="KW-0964">Secreted</keyword>
<keyword id="KW-0720">Serine protease</keyword>
<keyword id="KW-0732">Signal</keyword>
<keyword id="KW-0865">Zymogen</keyword>
<organism>
    <name type="scientific">Homo sapiens</name>
    <name type="common">Human</name>
    <dbReference type="NCBI Taxonomy" id="9606"/>
    <lineage>
        <taxon>Eukaryota</taxon>
        <taxon>Metazoa</taxon>
        <taxon>Chordata</taxon>
        <taxon>Craniata</taxon>
        <taxon>Vertebrata</taxon>
        <taxon>Euteleostomi</taxon>
        <taxon>Mammalia</taxon>
        <taxon>Eutheria</taxon>
        <taxon>Euarchontoglires</taxon>
        <taxon>Primates</taxon>
        <taxon>Haplorrhini</taxon>
        <taxon>Catarrhini</taxon>
        <taxon>Hominidae</taxon>
        <taxon>Homo</taxon>
    </lineage>
</organism>
<feature type="signal peptide" evidence="2">
    <location>
        <begin position="1"/>
        <end position="25"/>
    </location>
</feature>
<feature type="propeptide" id="PRO_0000027065" evidence="2">
    <location>
        <begin position="26"/>
        <end position="109"/>
    </location>
</feature>
<feature type="chain" id="PRO_0000027066" description="Neuroendocrine convertase 2">
    <location>
        <begin position="110"/>
        <end position="638"/>
    </location>
</feature>
<feature type="domain" description="Peptidase S8" evidence="4">
    <location>
        <begin position="129"/>
        <end position="453"/>
    </location>
</feature>
<feature type="domain" description="P/Homo B" evidence="3">
    <location>
        <begin position="461"/>
        <end position="597"/>
    </location>
</feature>
<feature type="active site" description="Charge relay system" evidence="4">
    <location>
        <position position="167"/>
    </location>
</feature>
<feature type="active site" description="Charge relay system" evidence="4">
    <location>
        <position position="208"/>
    </location>
</feature>
<feature type="active site" description="Charge relay system" evidence="4">
    <location>
        <position position="384"/>
    </location>
</feature>
<feature type="glycosylation site" description="N-linked (GlcNAc...) asparagine" evidence="2">
    <location>
        <position position="375"/>
    </location>
</feature>
<feature type="glycosylation site" description="N-linked (GlcNAc...) asparagine" evidence="2">
    <location>
        <position position="514"/>
    </location>
</feature>
<feature type="glycosylation site" description="N-linked (GlcNAc...) asparagine" evidence="2">
    <location>
        <position position="524"/>
    </location>
</feature>
<feature type="disulfide bond" evidence="1">
    <location>
        <begin position="225"/>
        <end position="376"/>
    </location>
</feature>
<feature type="disulfide bond" evidence="1">
    <location>
        <begin position="317"/>
        <end position="347"/>
    </location>
</feature>
<feature type="disulfide bond" evidence="1">
    <location>
        <begin position="468"/>
        <end position="494"/>
    </location>
</feature>
<feature type="splice variant" id="VSP_045873" description="In isoform 3." evidence="10">
    <location>
        <begin position="1"/>
        <end position="19"/>
    </location>
</feature>
<feature type="splice variant" id="VSP_043358" description="In isoform 2." evidence="9">
    <location>
        <begin position="60"/>
        <end position="94"/>
    </location>
</feature>
<feature type="sequence variant" id="VAR_079730" description="No effect on secretion; no effect on proglucagon processing; dbSNP:rs201718679." evidence="7">
    <original>A</original>
    <variation>D</variation>
    <location>
        <position position="77"/>
    </location>
</feature>
<feature type="sequence variant" id="VAR_069075" description="In dbSNP:rs17854040." evidence="5">
    <original>P</original>
    <variation>Q</variation>
    <location>
        <position position="244"/>
    </location>
</feature>
<feature type="sequence variant" id="VAR_079731" description="Decreased secretion; reduced proglucagon processing; dbSNP:rs144151196." evidence="7">
    <original>A</original>
    <variation>T</variation>
    <location>
        <position position="267"/>
    </location>
</feature>
<feature type="sequence variant" id="VAR_036548" description="In a colorectal cancer sample; somatic mutation; dbSNP:rs780820865." evidence="6">
    <original>D</original>
    <variation>N</variation>
    <location>
        <position position="424"/>
    </location>
</feature>
<feature type="sequence variant" id="VAR_079732" description="No effect on secretion; no effect on proglucagon processing; dbSNP:rs200711626." evidence="7">
    <original>R</original>
    <variation>W</variation>
    <location>
        <position position="430"/>
    </location>
</feature>
<feature type="sequence variant" id="VAR_069076" description="In dbSNP:rs17857236." evidence="5">
    <original>K</original>
    <variation>E</variation>
    <location>
        <position position="484"/>
    </location>
</feature>
<feature type="sequence variant" id="VAR_079733" description="No effect on secretion; no effect on proglucagon processing; dbSNP:rs139619496." evidence="7">
    <original>M</original>
    <variation>V</variation>
    <location>
        <position position="525"/>
    </location>
</feature>
<feature type="sequence conflict" description="In Ref. 1; AAA60032." evidence="11" ref="1">
    <original>EL</original>
    <variation>DV</variation>
    <location>
        <begin position="283"/>
        <end position="284"/>
    </location>
</feature>
<comment type="function">
    <text evidence="7 8">Serine endopeptidase which is involved in the processing of hormone and other protein precursors at sites comprised of pairs of basic amino acid residues. Responsible for the release of glucagon from proglucagon in pancreatic A cells.</text>
</comment>
<comment type="catalytic activity">
    <reaction>
        <text>Release of protein hormones and neuropeptides from their precursors, generally by hydrolysis of -Lys-Arg-|- bonds.</text>
        <dbReference type="EC" id="3.4.21.94"/>
    </reaction>
</comment>
<comment type="interaction">
    <interactant intactId="EBI-514360">
        <id>P16519</id>
    </interactant>
    <interactant intactId="EBI-18924329">
        <id>Q96IK1-2</id>
        <label>BOD1</label>
    </interactant>
    <organismsDiffer>false</organismsDiffer>
    <experiments>3</experiments>
</comment>
<comment type="subcellular location">
    <subcellularLocation>
        <location>Cytoplasmic vesicle</location>
        <location>Secretory vesicle</location>
    </subcellularLocation>
    <subcellularLocation>
        <location evidence="7">Secreted</location>
    </subcellularLocation>
    <text>Localized in the secretion granules.</text>
</comment>
<comment type="alternative products">
    <event type="alternative splicing"/>
    <isoform>
        <id>P16519-1</id>
        <name>1</name>
        <sequence type="displayed"/>
    </isoform>
    <isoform>
        <id>P16519-2</id>
        <name>2</name>
        <sequence type="described" ref="VSP_043358"/>
    </isoform>
    <isoform>
        <id>P16519-3</id>
        <name>3</name>
        <sequence type="described" ref="VSP_045873"/>
    </isoform>
</comment>
<comment type="similarity">
    <text evidence="11">Belongs to the peptidase S8 family. Furin subfamily.</text>
</comment>
<proteinExistence type="evidence at protein level"/>
<protein>
    <recommendedName>
        <fullName>Neuroendocrine convertase 2</fullName>
        <shortName>NEC 2</shortName>
        <ecNumber>3.4.21.94</ecNumber>
    </recommendedName>
    <alternativeName>
        <fullName>KEX2-like endoprotease 2</fullName>
    </alternativeName>
    <alternativeName>
        <fullName>Prohormone convertase 2</fullName>
    </alternativeName>
    <alternativeName>
        <fullName>Proprotein convertase 2</fullName>
        <shortName>PC2</shortName>
    </alternativeName>
</protein>